<protein>
    <recommendedName>
        <fullName>Vitronectin</fullName>
        <shortName>VN</shortName>
    </recommendedName>
    <alternativeName>
        <fullName>S-protein</fullName>
    </alternativeName>
    <alternativeName>
        <fullName>Serum-spreading factor</fullName>
    </alternativeName>
</protein>
<reference key="1">
    <citation type="journal article" date="1993" name="Gene">
        <title>Organization of the gene encoding mouse vitronectin.</title>
        <authorList>
            <person name="Seiffert D."/>
            <person name="Poenninger J."/>
            <person name="Binder B.R."/>
        </authorList>
    </citation>
    <scope>NUCLEOTIDE SEQUENCE [GENOMIC DNA]</scope>
    <source>
        <strain>BALB/cJ</strain>
        <tissue>Liver</tissue>
    </source>
</reference>
<reference key="2">
    <citation type="journal article" date="1991" name="Proc. Natl. Acad. Sci. U.S.A.">
        <title>Detection of vitronectin mRNA in tissues and cells of the mouse.</title>
        <authorList>
            <person name="Seiffert D."/>
            <person name="Keeton M."/>
            <person name="Eguchi Y."/>
            <person name="Sawdey M."/>
            <person name="Loskutoff D.J."/>
        </authorList>
    </citation>
    <scope>NUCLEOTIDE SEQUENCE [MRNA]</scope>
    <source>
        <tissue>Liver</tissue>
    </source>
</reference>
<reference key="3">
    <citation type="book" date="1996" name="Biology of vitronectins">
        <title>Primary structure of vitronectins and homology with other proteins.</title>
        <editorList>
            <person name="Preissner K.T."/>
            <person name="Rosenblatt S."/>
            <person name="Kost C."/>
            <person name="Wegerhoff J."/>
            <person name="Mosher D.F."/>
        </editorList>
        <authorList>
            <person name="Ehrlich H.J."/>
            <person name="Richter B."/>
            <person name="von der Ahe D."/>
            <person name="Preissner K.T."/>
        </authorList>
    </citation>
    <scope>NUCLEOTIDE SEQUENCE [MRNA]</scope>
    <source>
        <strain>BALB/cJ</strain>
        <tissue>Liver</tissue>
    </source>
</reference>
<reference key="4">
    <citation type="submission" date="2001-10" db="EMBL/GenBank/DDBJ databases">
        <title>Construction of a robust CHO cell-line for biopharmaceutical production.</title>
        <authorList>
            <person name="Lai D.-Z."/>
        </authorList>
    </citation>
    <scope>NUCLEOTIDE SEQUENCE [MRNA]</scope>
    <source>
        <strain>BALB/cJ</strain>
        <tissue>Liver</tissue>
    </source>
</reference>
<reference key="5">
    <citation type="journal article" date="2005" name="Science">
        <title>The transcriptional landscape of the mammalian genome.</title>
        <authorList>
            <person name="Carninci P."/>
            <person name="Kasukawa T."/>
            <person name="Katayama S."/>
            <person name="Gough J."/>
            <person name="Frith M.C."/>
            <person name="Maeda N."/>
            <person name="Oyama R."/>
            <person name="Ravasi T."/>
            <person name="Lenhard B."/>
            <person name="Wells C."/>
            <person name="Kodzius R."/>
            <person name="Shimokawa K."/>
            <person name="Bajic V.B."/>
            <person name="Brenner S.E."/>
            <person name="Batalov S."/>
            <person name="Forrest A.R."/>
            <person name="Zavolan M."/>
            <person name="Davis M.J."/>
            <person name="Wilming L.G."/>
            <person name="Aidinis V."/>
            <person name="Allen J.E."/>
            <person name="Ambesi-Impiombato A."/>
            <person name="Apweiler R."/>
            <person name="Aturaliya R.N."/>
            <person name="Bailey T.L."/>
            <person name="Bansal M."/>
            <person name="Baxter L."/>
            <person name="Beisel K.W."/>
            <person name="Bersano T."/>
            <person name="Bono H."/>
            <person name="Chalk A.M."/>
            <person name="Chiu K.P."/>
            <person name="Choudhary V."/>
            <person name="Christoffels A."/>
            <person name="Clutterbuck D.R."/>
            <person name="Crowe M.L."/>
            <person name="Dalla E."/>
            <person name="Dalrymple B.P."/>
            <person name="de Bono B."/>
            <person name="Della Gatta G."/>
            <person name="di Bernardo D."/>
            <person name="Down T."/>
            <person name="Engstrom P."/>
            <person name="Fagiolini M."/>
            <person name="Faulkner G."/>
            <person name="Fletcher C.F."/>
            <person name="Fukushima T."/>
            <person name="Furuno M."/>
            <person name="Futaki S."/>
            <person name="Gariboldi M."/>
            <person name="Georgii-Hemming P."/>
            <person name="Gingeras T.R."/>
            <person name="Gojobori T."/>
            <person name="Green R.E."/>
            <person name="Gustincich S."/>
            <person name="Harbers M."/>
            <person name="Hayashi Y."/>
            <person name="Hensch T.K."/>
            <person name="Hirokawa N."/>
            <person name="Hill D."/>
            <person name="Huminiecki L."/>
            <person name="Iacono M."/>
            <person name="Ikeo K."/>
            <person name="Iwama A."/>
            <person name="Ishikawa T."/>
            <person name="Jakt M."/>
            <person name="Kanapin A."/>
            <person name="Katoh M."/>
            <person name="Kawasawa Y."/>
            <person name="Kelso J."/>
            <person name="Kitamura H."/>
            <person name="Kitano H."/>
            <person name="Kollias G."/>
            <person name="Krishnan S.P."/>
            <person name="Kruger A."/>
            <person name="Kummerfeld S.K."/>
            <person name="Kurochkin I.V."/>
            <person name="Lareau L.F."/>
            <person name="Lazarevic D."/>
            <person name="Lipovich L."/>
            <person name="Liu J."/>
            <person name="Liuni S."/>
            <person name="McWilliam S."/>
            <person name="Madan Babu M."/>
            <person name="Madera M."/>
            <person name="Marchionni L."/>
            <person name="Matsuda H."/>
            <person name="Matsuzawa S."/>
            <person name="Miki H."/>
            <person name="Mignone F."/>
            <person name="Miyake S."/>
            <person name="Morris K."/>
            <person name="Mottagui-Tabar S."/>
            <person name="Mulder N."/>
            <person name="Nakano N."/>
            <person name="Nakauchi H."/>
            <person name="Ng P."/>
            <person name="Nilsson R."/>
            <person name="Nishiguchi S."/>
            <person name="Nishikawa S."/>
            <person name="Nori F."/>
            <person name="Ohara O."/>
            <person name="Okazaki Y."/>
            <person name="Orlando V."/>
            <person name="Pang K.C."/>
            <person name="Pavan W.J."/>
            <person name="Pavesi G."/>
            <person name="Pesole G."/>
            <person name="Petrovsky N."/>
            <person name="Piazza S."/>
            <person name="Reed J."/>
            <person name="Reid J.F."/>
            <person name="Ring B.Z."/>
            <person name="Ringwald M."/>
            <person name="Rost B."/>
            <person name="Ruan Y."/>
            <person name="Salzberg S.L."/>
            <person name="Sandelin A."/>
            <person name="Schneider C."/>
            <person name="Schoenbach C."/>
            <person name="Sekiguchi K."/>
            <person name="Semple C.A."/>
            <person name="Seno S."/>
            <person name="Sessa L."/>
            <person name="Sheng Y."/>
            <person name="Shibata Y."/>
            <person name="Shimada H."/>
            <person name="Shimada K."/>
            <person name="Silva D."/>
            <person name="Sinclair B."/>
            <person name="Sperling S."/>
            <person name="Stupka E."/>
            <person name="Sugiura K."/>
            <person name="Sultana R."/>
            <person name="Takenaka Y."/>
            <person name="Taki K."/>
            <person name="Tammoja K."/>
            <person name="Tan S.L."/>
            <person name="Tang S."/>
            <person name="Taylor M.S."/>
            <person name="Tegner J."/>
            <person name="Teichmann S.A."/>
            <person name="Ueda H.R."/>
            <person name="van Nimwegen E."/>
            <person name="Verardo R."/>
            <person name="Wei C.L."/>
            <person name="Yagi K."/>
            <person name="Yamanishi H."/>
            <person name="Zabarovsky E."/>
            <person name="Zhu S."/>
            <person name="Zimmer A."/>
            <person name="Hide W."/>
            <person name="Bult C."/>
            <person name="Grimmond S.M."/>
            <person name="Teasdale R.D."/>
            <person name="Liu E.T."/>
            <person name="Brusic V."/>
            <person name="Quackenbush J."/>
            <person name="Wahlestedt C."/>
            <person name="Mattick J.S."/>
            <person name="Hume D.A."/>
            <person name="Kai C."/>
            <person name="Sasaki D."/>
            <person name="Tomaru Y."/>
            <person name="Fukuda S."/>
            <person name="Kanamori-Katayama M."/>
            <person name="Suzuki M."/>
            <person name="Aoki J."/>
            <person name="Arakawa T."/>
            <person name="Iida J."/>
            <person name="Imamura K."/>
            <person name="Itoh M."/>
            <person name="Kato T."/>
            <person name="Kawaji H."/>
            <person name="Kawagashira N."/>
            <person name="Kawashima T."/>
            <person name="Kojima M."/>
            <person name="Kondo S."/>
            <person name="Konno H."/>
            <person name="Nakano K."/>
            <person name="Ninomiya N."/>
            <person name="Nishio T."/>
            <person name="Okada M."/>
            <person name="Plessy C."/>
            <person name="Shibata K."/>
            <person name="Shiraki T."/>
            <person name="Suzuki S."/>
            <person name="Tagami M."/>
            <person name="Waki K."/>
            <person name="Watahiki A."/>
            <person name="Okamura-Oho Y."/>
            <person name="Suzuki H."/>
            <person name="Kawai J."/>
            <person name="Hayashizaki Y."/>
        </authorList>
    </citation>
    <scope>NUCLEOTIDE SEQUENCE [LARGE SCALE MRNA]</scope>
    <source>
        <strain>C57BL/6J</strain>
        <tissue>Embryo</tissue>
        <tissue>Gall bladder</tissue>
    </source>
</reference>
<reference key="6">
    <citation type="journal article" date="2009" name="PLoS Biol.">
        <title>Lineage-specific biology revealed by a finished genome assembly of the mouse.</title>
        <authorList>
            <person name="Church D.M."/>
            <person name="Goodstadt L."/>
            <person name="Hillier L.W."/>
            <person name="Zody M.C."/>
            <person name="Goldstein S."/>
            <person name="She X."/>
            <person name="Bult C.J."/>
            <person name="Agarwala R."/>
            <person name="Cherry J.L."/>
            <person name="DiCuccio M."/>
            <person name="Hlavina W."/>
            <person name="Kapustin Y."/>
            <person name="Meric P."/>
            <person name="Maglott D."/>
            <person name="Birtle Z."/>
            <person name="Marques A.C."/>
            <person name="Graves T."/>
            <person name="Zhou S."/>
            <person name="Teague B."/>
            <person name="Potamousis K."/>
            <person name="Churas C."/>
            <person name="Place M."/>
            <person name="Herschleb J."/>
            <person name="Runnheim R."/>
            <person name="Forrest D."/>
            <person name="Amos-Landgraf J."/>
            <person name="Schwartz D.C."/>
            <person name="Cheng Z."/>
            <person name="Lindblad-Toh K."/>
            <person name="Eichler E.E."/>
            <person name="Ponting C.P."/>
        </authorList>
    </citation>
    <scope>NUCLEOTIDE SEQUENCE [LARGE SCALE GENOMIC DNA]</scope>
    <source>
        <strain>C57BL/6J</strain>
    </source>
</reference>
<reference key="7">
    <citation type="submission" date="2005-07" db="EMBL/GenBank/DDBJ databases">
        <authorList>
            <person name="Mural R.J."/>
            <person name="Adams M.D."/>
            <person name="Myers E.W."/>
            <person name="Smith H.O."/>
            <person name="Venter J.C."/>
        </authorList>
    </citation>
    <scope>NUCLEOTIDE SEQUENCE [LARGE SCALE GENOMIC DNA]</scope>
</reference>
<reference key="8">
    <citation type="journal article" date="2004" name="Genome Res.">
        <title>The status, quality, and expansion of the NIH full-length cDNA project: the Mammalian Gene Collection (MGC).</title>
        <authorList>
            <consortium name="The MGC Project Team"/>
        </authorList>
    </citation>
    <scope>NUCLEOTIDE SEQUENCE [LARGE SCALE MRNA]</scope>
    <source>
        <strain>FVB/N</strain>
        <tissue>Salivary gland</tissue>
    </source>
</reference>
<reference key="9">
    <citation type="journal article" date="1992" name="Biochim. Biophys. Acta">
        <title>Vitronectin diversity in evolution but uniformity in ligand binding and size of the core polypeptide.</title>
        <authorList>
            <person name="Nakashima N."/>
            <person name="Miyazaki K."/>
            <person name="Ishikawa M."/>
            <person name="Yatohgo T."/>
            <person name="Ogawa H."/>
            <person name="Uchibori H."/>
            <person name="Matsumoto I."/>
            <person name="Seno N."/>
            <person name="Hayashi M."/>
        </authorList>
    </citation>
    <scope>PROTEIN SEQUENCE OF 20-44</scope>
</reference>
<reference key="10">
    <citation type="journal article" date="2007" name="J. Proteome Res.">
        <title>Enhanced analysis of the mouse plasma proteome using cysteine-containing tryptic glycopeptides.</title>
        <authorList>
            <person name="Bernhard O.K."/>
            <person name="Kapp E.A."/>
            <person name="Simpson R.J."/>
        </authorList>
    </citation>
    <scope>GLYCOSYLATION [LARGE SCALE ANALYSIS] AT ASN-241</scope>
    <source>
        <strain>C57BL/6J</strain>
        <tissue>Plasma</tissue>
    </source>
</reference>
<reference key="11">
    <citation type="journal article" date="2010" name="Cell">
        <title>A tissue-specific atlas of mouse protein phosphorylation and expression.</title>
        <authorList>
            <person name="Huttlin E.L."/>
            <person name="Jedrychowski M.P."/>
            <person name="Elias J.E."/>
            <person name="Goswami T."/>
            <person name="Rad R."/>
            <person name="Beausoleil S.A."/>
            <person name="Villen J."/>
            <person name="Haas W."/>
            <person name="Sowa M.E."/>
            <person name="Gygi S.P."/>
        </authorList>
    </citation>
    <scope>PHOSPHORYLATION [LARGE SCALE ANALYSIS] AT SER-362</scope>
    <scope>IDENTIFICATION BY MASS SPECTROMETRY [LARGE SCALE ANALYSIS]</scope>
    <source>
        <tissue>Brown adipose tissue</tissue>
        <tissue>Heart</tissue>
        <tissue>Kidney</tissue>
        <tissue>Liver</tissue>
        <tissue>Lung</tissue>
        <tissue>Pancreas</tissue>
        <tissue>Spleen</tissue>
        <tissue>Testis</tissue>
    </source>
</reference>
<accession>P29788</accession>
<accession>Q5SYG4</accession>
<accession>Q8VII4</accession>
<accession>Q91X32</accession>
<accession>Q9D080</accession>
<name>VTNC_MOUSE</name>
<feature type="signal peptide" evidence="6">
    <location>
        <begin position="1"/>
        <end position="19"/>
    </location>
</feature>
<feature type="chain" id="PRO_0000036398" description="Vitronectin">
    <location>
        <begin position="20"/>
        <end position="478"/>
    </location>
</feature>
<feature type="domain" description="SMB" evidence="4">
    <location>
        <begin position="20"/>
        <end position="63"/>
    </location>
</feature>
<feature type="repeat" description="Hemopexin 1">
    <location>
        <begin position="157"/>
        <end position="201"/>
    </location>
</feature>
<feature type="repeat" description="Hemopexin 2">
    <location>
        <begin position="202"/>
        <end position="249"/>
    </location>
</feature>
<feature type="repeat" description="Hemopexin 3">
    <location>
        <begin position="250"/>
        <end position="304"/>
    </location>
</feature>
<feature type="repeat" description="Hemopexin 4">
    <location>
        <begin position="420"/>
        <end position="473"/>
    </location>
</feature>
<feature type="region of interest" description="Disordered" evidence="5">
    <location>
        <begin position="82"/>
        <end position="153"/>
    </location>
</feature>
<feature type="region of interest" description="Disordered" evidence="5">
    <location>
        <begin position="359"/>
        <end position="395"/>
    </location>
</feature>
<feature type="region of interest" description="Heparin-binding" evidence="1">
    <location>
        <begin position="366"/>
        <end position="399"/>
    </location>
</feature>
<feature type="short sequence motif" description="Cell attachment site">
    <location>
        <begin position="64"/>
        <end position="66"/>
    </location>
</feature>
<feature type="compositionally biased region" description="Polar residues" evidence="5">
    <location>
        <begin position="86"/>
        <end position="99"/>
    </location>
</feature>
<feature type="compositionally biased region" description="Basic and acidic residues" evidence="5">
    <location>
        <begin position="131"/>
        <end position="141"/>
    </location>
</feature>
<feature type="compositionally biased region" description="Basic residues" evidence="5">
    <location>
        <begin position="364"/>
        <end position="389"/>
    </location>
</feature>
<feature type="modified residue" description="Phosphothreonine" evidence="2">
    <location>
        <position position="69"/>
    </location>
</feature>
<feature type="modified residue" description="Sulfotyrosine" evidence="3">
    <location>
        <position position="75"/>
    </location>
</feature>
<feature type="modified residue" description="Sulfotyrosine" evidence="3">
    <location>
        <position position="78"/>
    </location>
</feature>
<feature type="modified residue" description="Sulfotyrosine" evidence="3">
    <location>
        <position position="80"/>
    </location>
</feature>
<feature type="modified residue" description="Sulfotyrosine" evidence="3">
    <location>
        <position position="278"/>
    </location>
</feature>
<feature type="modified residue" description="Sulfotyrosine" evidence="3">
    <location>
        <position position="281"/>
    </location>
</feature>
<feature type="modified residue" description="Phosphoserine" evidence="2">
    <location>
        <position position="311"/>
    </location>
</feature>
<feature type="modified residue" description="Phosphoserine" evidence="9">
    <location>
        <position position="362"/>
    </location>
</feature>
<feature type="modified residue" description="Phosphoserine; by PKA" evidence="2">
    <location>
        <position position="398"/>
    </location>
</feature>
<feature type="modified residue" description="Sulfotyrosine" evidence="3">
    <location>
        <position position="416"/>
    </location>
</feature>
<feature type="modified residue" description="Sulfotyrosine" evidence="3">
    <location>
        <position position="419"/>
    </location>
</feature>
<feature type="modified residue" description="Sulfotyrosine" evidence="3">
    <location>
        <position position="421"/>
    </location>
</feature>
<feature type="glycosylation site" description="N-linked (GlcNAc...) asparagine" evidence="3">
    <location>
        <position position="86"/>
    </location>
</feature>
<feature type="glycosylation site" description="N-linked (GlcNAc...) asparagine" evidence="3">
    <location>
        <position position="168"/>
    </location>
</feature>
<feature type="glycosylation site" description="N-linked (GlcNAc...) asparagine" evidence="7">
    <location>
        <position position="241"/>
    </location>
</feature>
<feature type="disulfide bond" evidence="4">
    <location>
        <begin position="24"/>
        <end position="40"/>
    </location>
</feature>
<feature type="disulfide bond" evidence="4">
    <location>
        <begin position="24"/>
        <end position="28"/>
    </location>
</feature>
<feature type="disulfide bond" evidence="4">
    <location>
        <begin position="28"/>
        <end position="58"/>
    </location>
</feature>
<feature type="disulfide bond" evidence="4">
    <location>
        <begin position="38"/>
        <end position="51"/>
    </location>
</feature>
<feature type="disulfide bond" evidence="4">
    <location>
        <begin position="38"/>
        <end position="40"/>
    </location>
</feature>
<feature type="disulfide bond" evidence="4">
    <location>
        <begin position="44"/>
        <end position="50"/>
    </location>
</feature>
<feature type="disulfide bond" evidence="4">
    <location>
        <begin position="51"/>
        <end position="58"/>
    </location>
</feature>
<feature type="disulfide bond" evidence="4">
    <location>
        <begin position="292"/>
        <end position="431"/>
    </location>
</feature>
<feature type="sequence conflict" description="In Ref. 4; AAL34534." evidence="8" ref="4">
    <original>CY</original>
    <variation>RC</variation>
    <location>
        <begin position="179"/>
        <end position="180"/>
    </location>
</feature>
<feature type="sequence conflict" description="In Ref. 8; AAH12690." evidence="8" ref="8">
    <original>A</original>
    <variation>T</variation>
    <location>
        <position position="186"/>
    </location>
</feature>
<feature type="sequence conflict" description="In Ref. 4; AAL34534." evidence="8" ref="4">
    <original>Y</original>
    <variation>H</variation>
    <location>
        <position position="281"/>
    </location>
</feature>
<feature type="sequence conflict" description="In Ref. 5; BAB27809." evidence="8" ref="5">
    <original>A</original>
    <variation>T</variation>
    <location>
        <position position="348"/>
    </location>
</feature>
<feature type="sequence conflict" description="In Ref. 4; AAL34534." evidence="8" ref="4">
    <original>K</original>
    <variation>P</variation>
    <location>
        <position position="369"/>
    </location>
</feature>
<feature type="sequence conflict" description="In Ref. 2; AAA40558." evidence="8" ref="2">
    <location>
        <begin position="383"/>
        <end position="384"/>
    </location>
</feature>
<feature type="sequence conflict" description="In Ref. 2; AAA40558." evidence="8" ref="2">
    <original>Y</original>
    <variation>K</variation>
    <location>
        <position position="416"/>
    </location>
</feature>
<organism>
    <name type="scientific">Mus musculus</name>
    <name type="common">Mouse</name>
    <dbReference type="NCBI Taxonomy" id="10090"/>
    <lineage>
        <taxon>Eukaryota</taxon>
        <taxon>Metazoa</taxon>
        <taxon>Chordata</taxon>
        <taxon>Craniata</taxon>
        <taxon>Vertebrata</taxon>
        <taxon>Euteleostomi</taxon>
        <taxon>Mammalia</taxon>
        <taxon>Eutheria</taxon>
        <taxon>Euarchontoglires</taxon>
        <taxon>Glires</taxon>
        <taxon>Rodentia</taxon>
        <taxon>Myomorpha</taxon>
        <taxon>Muroidea</taxon>
        <taxon>Muridae</taxon>
        <taxon>Murinae</taxon>
        <taxon>Mus</taxon>
        <taxon>Mus</taxon>
    </lineage>
</organism>
<sequence length="478" mass="54849">MAPLRPFFILALVAWVSLADQESCKGRCTQGFMASKKCQCDELCTYYQSCCADYMEQCKPQVTRGDVFTMPEDDYWSYDYVEEPKNNTNTGVQPENTSPPGDLNPRTDGTLKPTAFLDPEEQPSTPAPKVEQQEEILRPDTTDQGTPEFPEEELCSGKPFDAFTDLKNGSLFAFRGQYCYELDETAVRPGYPKLIQDVWGIEGPIDAAFTRINCQGKTYLFKGSQYWRFEDGVLDPGYPRNISEGFSGIPDNVDAAFALPAHRYSGRERVYFFKGKQYWEYEFQQQPSQEECEGSSLSAVFEHFALLQRDSWENIFELLFWGRSSDGAREPQFISRNWHGVPGKVDAAMAGRIYVTGSLSHSAQAKKQKSKRRSRKRYRSRRGRGHRRSQSSNSRRSSRSIWFSLFSSEESGLGTYNNYDYDMDWLVPATCEPIQSVYFFSGDKYYRVNLRTRRVDSVNPPYPRSIAQYWLGCPTSEK</sequence>
<evidence type="ECO:0000250" key="1"/>
<evidence type="ECO:0000250" key="2">
    <source>
        <dbReference type="UniProtKB" id="P04004"/>
    </source>
</evidence>
<evidence type="ECO:0000255" key="3"/>
<evidence type="ECO:0000255" key="4">
    <source>
        <dbReference type="PROSITE-ProRule" id="PRU00350"/>
    </source>
</evidence>
<evidence type="ECO:0000256" key="5">
    <source>
        <dbReference type="SAM" id="MobiDB-lite"/>
    </source>
</evidence>
<evidence type="ECO:0000269" key="6">
    <source>
    </source>
</evidence>
<evidence type="ECO:0000269" key="7">
    <source>
    </source>
</evidence>
<evidence type="ECO:0000305" key="8"/>
<evidence type="ECO:0007744" key="9">
    <source>
    </source>
</evidence>
<proteinExistence type="evidence at protein level"/>
<dbReference type="EMBL" id="X72091">
    <property type="protein sequence ID" value="CAA50981.1"/>
    <property type="molecule type" value="Genomic_DNA"/>
</dbReference>
<dbReference type="EMBL" id="M77123">
    <property type="protein sequence ID" value="AAA40558.1"/>
    <property type="molecule type" value="mRNA"/>
</dbReference>
<dbReference type="EMBL" id="X63003">
    <property type="protein sequence ID" value="CAA44732.1"/>
    <property type="molecule type" value="mRNA"/>
</dbReference>
<dbReference type="EMBL" id="AF440693">
    <property type="protein sequence ID" value="AAL34534.1"/>
    <property type="molecule type" value="mRNA"/>
</dbReference>
<dbReference type="EMBL" id="AK011736">
    <property type="protein sequence ID" value="BAB27809.1"/>
    <property type="molecule type" value="mRNA"/>
</dbReference>
<dbReference type="EMBL" id="AK090325">
    <property type="protein sequence ID" value="BAC41171.1"/>
    <property type="molecule type" value="mRNA"/>
</dbReference>
<dbReference type="EMBL" id="AL591177">
    <property type="status" value="NOT_ANNOTATED_CDS"/>
    <property type="molecule type" value="Genomic_DNA"/>
</dbReference>
<dbReference type="EMBL" id="CH466556">
    <property type="protein sequence ID" value="EDL15582.1"/>
    <property type="molecule type" value="Genomic_DNA"/>
</dbReference>
<dbReference type="EMBL" id="BC012690">
    <property type="protein sequence ID" value="AAH12690.1"/>
    <property type="molecule type" value="mRNA"/>
</dbReference>
<dbReference type="CCDS" id="CCDS25106.1"/>
<dbReference type="PIR" id="S19894">
    <property type="entry name" value="SGMSV"/>
</dbReference>
<dbReference type="RefSeq" id="NP_035837.1">
    <property type="nucleotide sequence ID" value="NM_011707.2"/>
</dbReference>
<dbReference type="SMR" id="P29788"/>
<dbReference type="BioGRID" id="204539">
    <property type="interactions" value="2"/>
</dbReference>
<dbReference type="ComplexPortal" id="CPX-492">
    <property type="entry name" value="Vitronectin-PAI-1 complex"/>
</dbReference>
<dbReference type="ComplexPortal" id="CPX-526">
    <property type="entry name" value="uPA-uPAR-vitronectin complex"/>
</dbReference>
<dbReference type="ELM" id="P29788"/>
<dbReference type="FunCoup" id="P29788">
    <property type="interactions" value="421"/>
</dbReference>
<dbReference type="IntAct" id="P29788">
    <property type="interactions" value="2"/>
</dbReference>
<dbReference type="STRING" id="10090.ENSMUSP00000017488"/>
<dbReference type="GlyCosmos" id="P29788">
    <property type="glycosylation" value="3 sites, No reported glycans"/>
</dbReference>
<dbReference type="GlyGen" id="P29788">
    <property type="glycosylation" value="4 sites, 3 N-linked glycans (3 sites), 1 O-linked glycan (1 site)"/>
</dbReference>
<dbReference type="iPTMnet" id="P29788"/>
<dbReference type="PhosphoSitePlus" id="P29788"/>
<dbReference type="SwissPalm" id="P29788"/>
<dbReference type="CPTAC" id="non-CPTAC-3512"/>
<dbReference type="CPTAC" id="non-CPTAC-3513"/>
<dbReference type="jPOST" id="P29788"/>
<dbReference type="PaxDb" id="10090-ENSMUSP00000017488"/>
<dbReference type="PeptideAtlas" id="P29788"/>
<dbReference type="ProteomicsDB" id="297829"/>
<dbReference type="DNASU" id="22370"/>
<dbReference type="Ensembl" id="ENSMUST00000017488.5">
    <property type="protein sequence ID" value="ENSMUSP00000017488.5"/>
    <property type="gene ID" value="ENSMUSG00000017344.5"/>
</dbReference>
<dbReference type="GeneID" id="22370"/>
<dbReference type="KEGG" id="mmu:22370"/>
<dbReference type="UCSC" id="uc007kjk.2">
    <property type="organism name" value="mouse"/>
</dbReference>
<dbReference type="AGR" id="MGI:98940"/>
<dbReference type="CTD" id="7448"/>
<dbReference type="MGI" id="MGI:98940">
    <property type="gene designation" value="Vtn"/>
</dbReference>
<dbReference type="VEuPathDB" id="HostDB:ENSMUSG00000017344"/>
<dbReference type="eggNOG" id="KOG1565">
    <property type="taxonomic scope" value="Eukaryota"/>
</dbReference>
<dbReference type="GeneTree" id="ENSGT00530000063751"/>
<dbReference type="HOGENOM" id="CLU_046227_0_0_1"/>
<dbReference type="InParanoid" id="P29788"/>
<dbReference type="OMA" id="FEHFAMM"/>
<dbReference type="OrthoDB" id="9898692at2759"/>
<dbReference type="PhylomeDB" id="P29788"/>
<dbReference type="TreeFam" id="TF332780"/>
<dbReference type="Reactome" id="R-MMU-2129379">
    <property type="pathway name" value="Molecules associated with elastic fibres"/>
</dbReference>
<dbReference type="Reactome" id="R-MMU-216083">
    <property type="pathway name" value="Integrin cell surface interactions"/>
</dbReference>
<dbReference type="Reactome" id="R-MMU-3000170">
    <property type="pathway name" value="Syndecan interactions"/>
</dbReference>
<dbReference type="Reactome" id="R-MMU-3000178">
    <property type="pathway name" value="ECM proteoglycans"/>
</dbReference>
<dbReference type="Reactome" id="R-MMU-977606">
    <property type="pathway name" value="Regulation of Complement cascade"/>
</dbReference>
<dbReference type="BioGRID-ORCS" id="22370">
    <property type="hits" value="2 hits in 77 CRISPR screens"/>
</dbReference>
<dbReference type="ChiTaRS" id="Vtn">
    <property type="organism name" value="mouse"/>
</dbReference>
<dbReference type="PRO" id="PR:P29788"/>
<dbReference type="Proteomes" id="UP000000589">
    <property type="component" value="Chromosome 11"/>
</dbReference>
<dbReference type="RNAct" id="P29788">
    <property type="molecule type" value="protein"/>
</dbReference>
<dbReference type="Bgee" id="ENSMUSG00000017344">
    <property type="expression patterns" value="Expressed in retinal neural layer and 209 other cell types or tissues"/>
</dbReference>
<dbReference type="GO" id="GO:0005604">
    <property type="term" value="C:basement membrane"/>
    <property type="evidence" value="ECO:0007669"/>
    <property type="project" value="Ensembl"/>
</dbReference>
<dbReference type="GO" id="GO:0062023">
    <property type="term" value="C:collagen-containing extracellular matrix"/>
    <property type="evidence" value="ECO:0007005"/>
    <property type="project" value="BHF-UCL"/>
</dbReference>
<dbReference type="GO" id="GO:0031012">
    <property type="term" value="C:extracellular matrix"/>
    <property type="evidence" value="ECO:0000314"/>
    <property type="project" value="MGI"/>
</dbReference>
<dbReference type="GO" id="GO:0005615">
    <property type="term" value="C:extracellular space"/>
    <property type="evidence" value="ECO:0007669"/>
    <property type="project" value="Ensembl"/>
</dbReference>
<dbReference type="GO" id="GO:0005796">
    <property type="term" value="C:Golgi lumen"/>
    <property type="evidence" value="ECO:0007669"/>
    <property type="project" value="Ensembl"/>
</dbReference>
<dbReference type="GO" id="GO:1904090">
    <property type="term" value="C:peptidase inhibitor complex"/>
    <property type="evidence" value="ECO:0000266"/>
    <property type="project" value="ComplexPortal"/>
</dbReference>
<dbReference type="GO" id="GO:0098637">
    <property type="term" value="C:protein complex involved in cell-matrix adhesion"/>
    <property type="evidence" value="ECO:0000266"/>
    <property type="project" value="ComplexPortal"/>
</dbReference>
<dbReference type="GO" id="GO:0048237">
    <property type="term" value="C:rough endoplasmic reticulum lumen"/>
    <property type="evidence" value="ECO:0007669"/>
    <property type="project" value="Ensembl"/>
</dbReference>
<dbReference type="GO" id="GO:0005518">
    <property type="term" value="F:collagen binding"/>
    <property type="evidence" value="ECO:0007669"/>
    <property type="project" value="Ensembl"/>
</dbReference>
<dbReference type="GO" id="GO:0050840">
    <property type="term" value="F:extracellular matrix binding"/>
    <property type="evidence" value="ECO:0000314"/>
    <property type="project" value="MGI"/>
</dbReference>
<dbReference type="GO" id="GO:0008201">
    <property type="term" value="F:heparin binding"/>
    <property type="evidence" value="ECO:0007669"/>
    <property type="project" value="UniProtKB-KW"/>
</dbReference>
<dbReference type="GO" id="GO:0042802">
    <property type="term" value="F:identical protein binding"/>
    <property type="evidence" value="ECO:0007669"/>
    <property type="project" value="Ensembl"/>
</dbReference>
<dbReference type="GO" id="GO:0005178">
    <property type="term" value="F:integrin binding"/>
    <property type="evidence" value="ECO:0007669"/>
    <property type="project" value="Ensembl"/>
</dbReference>
<dbReference type="GO" id="GO:0030247">
    <property type="term" value="F:polysaccharide binding"/>
    <property type="evidence" value="ECO:0007669"/>
    <property type="project" value="InterPro"/>
</dbReference>
<dbReference type="GO" id="GO:0005044">
    <property type="term" value="F:scavenger receptor activity"/>
    <property type="evidence" value="ECO:0007669"/>
    <property type="project" value="InterPro"/>
</dbReference>
<dbReference type="GO" id="GO:0033627">
    <property type="term" value="P:cell adhesion mediated by integrin"/>
    <property type="evidence" value="ECO:0007669"/>
    <property type="project" value="Ensembl"/>
</dbReference>
<dbReference type="GO" id="GO:0016477">
    <property type="term" value="P:cell migration"/>
    <property type="evidence" value="ECO:0007669"/>
    <property type="project" value="Ensembl"/>
</dbReference>
<dbReference type="GO" id="GO:0007160">
    <property type="term" value="P:cell-matrix adhesion"/>
    <property type="evidence" value="ECO:0000314"/>
    <property type="project" value="MGI"/>
</dbReference>
<dbReference type="GO" id="GO:0035987">
    <property type="term" value="P:endodermal cell differentiation"/>
    <property type="evidence" value="ECO:0007669"/>
    <property type="project" value="Ensembl"/>
</dbReference>
<dbReference type="GO" id="GO:0030198">
    <property type="term" value="P:extracellular matrix organization"/>
    <property type="evidence" value="ECO:0000314"/>
    <property type="project" value="MGI"/>
</dbReference>
<dbReference type="GO" id="GO:0006955">
    <property type="term" value="P:immune response"/>
    <property type="evidence" value="ECO:0007669"/>
    <property type="project" value="InterPro"/>
</dbReference>
<dbReference type="GO" id="GO:0007229">
    <property type="term" value="P:integrin-mediated signaling pathway"/>
    <property type="evidence" value="ECO:0007669"/>
    <property type="project" value="Ensembl"/>
</dbReference>
<dbReference type="GO" id="GO:0097421">
    <property type="term" value="P:liver regeneration"/>
    <property type="evidence" value="ECO:0007669"/>
    <property type="project" value="Ensembl"/>
</dbReference>
<dbReference type="GO" id="GO:0051918">
    <property type="term" value="P:negative regulation of fibrinolysis"/>
    <property type="evidence" value="ECO:0000303"/>
    <property type="project" value="ComplexPortal"/>
</dbReference>
<dbReference type="GO" id="GO:0045861">
    <property type="term" value="P:negative regulation of proteolysis"/>
    <property type="evidence" value="ECO:0007669"/>
    <property type="project" value="Ensembl"/>
</dbReference>
<dbReference type="GO" id="GO:0048709">
    <property type="term" value="P:oligodendrocyte differentiation"/>
    <property type="evidence" value="ECO:0000314"/>
    <property type="project" value="CACAO"/>
</dbReference>
<dbReference type="GO" id="GO:0010811">
    <property type="term" value="P:positive regulation of cell-substrate adhesion"/>
    <property type="evidence" value="ECO:0000314"/>
    <property type="project" value="MGI"/>
</dbReference>
<dbReference type="GO" id="GO:0048260">
    <property type="term" value="P:positive regulation of receptor-mediated endocytosis"/>
    <property type="evidence" value="ECO:0007669"/>
    <property type="project" value="Ensembl"/>
</dbReference>
<dbReference type="GO" id="GO:0014911">
    <property type="term" value="P:positive regulation of smooth muscle cell migration"/>
    <property type="evidence" value="ECO:0007669"/>
    <property type="project" value="Ensembl"/>
</dbReference>
<dbReference type="GO" id="GO:1900748">
    <property type="term" value="P:positive regulation of vascular endothelial growth factor signaling pathway"/>
    <property type="evidence" value="ECO:0007669"/>
    <property type="project" value="Ensembl"/>
</dbReference>
<dbReference type="GO" id="GO:0051258">
    <property type="term" value="P:protein polymerization"/>
    <property type="evidence" value="ECO:0007669"/>
    <property type="project" value="Ensembl"/>
</dbReference>
<dbReference type="GO" id="GO:0030155">
    <property type="term" value="P:regulation of cell adhesion"/>
    <property type="evidence" value="ECO:0000266"/>
    <property type="project" value="ComplexPortal"/>
</dbReference>
<dbReference type="GO" id="GO:0061302">
    <property type="term" value="P:smooth muscle cell-matrix adhesion"/>
    <property type="evidence" value="ECO:0007669"/>
    <property type="project" value="Ensembl"/>
</dbReference>
<dbReference type="CDD" id="cd00094">
    <property type="entry name" value="HX"/>
    <property type="match status" value="1"/>
</dbReference>
<dbReference type="FunFam" id="4.10.410.20:FF:000002">
    <property type="entry name" value="Ectonucleotide pyrophosphatase/phosphodiesterase family member 2"/>
    <property type="match status" value="1"/>
</dbReference>
<dbReference type="FunFam" id="2.110.10.10:FF:000025">
    <property type="entry name" value="Vitronectin"/>
    <property type="match status" value="1"/>
</dbReference>
<dbReference type="FunFam" id="2.110.10.10:FF:000010">
    <property type="entry name" value="vitronectin"/>
    <property type="match status" value="1"/>
</dbReference>
<dbReference type="Gene3D" id="4.10.410.20">
    <property type="match status" value="1"/>
</dbReference>
<dbReference type="Gene3D" id="2.110.10.10">
    <property type="entry name" value="Hemopexin-like domain"/>
    <property type="match status" value="2"/>
</dbReference>
<dbReference type="InterPro" id="IPR051298">
    <property type="entry name" value="Heme_transport/Cell_adhesion"/>
</dbReference>
<dbReference type="InterPro" id="IPR000585">
    <property type="entry name" value="Hemopexin-like_dom"/>
</dbReference>
<dbReference type="InterPro" id="IPR036375">
    <property type="entry name" value="Hemopexin-like_dom_sf"/>
</dbReference>
<dbReference type="InterPro" id="IPR018487">
    <property type="entry name" value="Hemopexin-like_repeat"/>
</dbReference>
<dbReference type="InterPro" id="IPR018486">
    <property type="entry name" value="Hemopexin_CS"/>
</dbReference>
<dbReference type="InterPro" id="IPR020436">
    <property type="entry name" value="SMB_chordata"/>
</dbReference>
<dbReference type="InterPro" id="IPR036024">
    <property type="entry name" value="Somatomedin_B-like_dom_sf"/>
</dbReference>
<dbReference type="InterPro" id="IPR001212">
    <property type="entry name" value="Somatomedin_B_dom"/>
</dbReference>
<dbReference type="PANTHER" id="PTHR22917">
    <property type="entry name" value="HEMOPEXIN DOMAIN-CONTAINING PROTEIN"/>
    <property type="match status" value="1"/>
</dbReference>
<dbReference type="PANTHER" id="PTHR22917:SF3">
    <property type="entry name" value="VITRONECTIN"/>
    <property type="match status" value="1"/>
</dbReference>
<dbReference type="Pfam" id="PF00045">
    <property type="entry name" value="Hemopexin"/>
    <property type="match status" value="4"/>
</dbReference>
<dbReference type="Pfam" id="PF01033">
    <property type="entry name" value="Somatomedin_B"/>
    <property type="match status" value="1"/>
</dbReference>
<dbReference type="PRINTS" id="PR00022">
    <property type="entry name" value="SOMATOMEDINB"/>
</dbReference>
<dbReference type="SMART" id="SM00120">
    <property type="entry name" value="HX"/>
    <property type="match status" value="4"/>
</dbReference>
<dbReference type="SMART" id="SM00201">
    <property type="entry name" value="SO"/>
    <property type="match status" value="1"/>
</dbReference>
<dbReference type="SUPFAM" id="SSF50923">
    <property type="entry name" value="Hemopexin-like domain"/>
    <property type="match status" value="1"/>
</dbReference>
<dbReference type="SUPFAM" id="SSF90188">
    <property type="entry name" value="Somatomedin B domain"/>
    <property type="match status" value="1"/>
</dbReference>
<dbReference type="PROSITE" id="PS00024">
    <property type="entry name" value="HEMOPEXIN"/>
    <property type="match status" value="2"/>
</dbReference>
<dbReference type="PROSITE" id="PS51642">
    <property type="entry name" value="HEMOPEXIN_2"/>
    <property type="match status" value="4"/>
</dbReference>
<dbReference type="PROSITE" id="PS00524">
    <property type="entry name" value="SMB_1"/>
    <property type="match status" value="1"/>
</dbReference>
<dbReference type="PROSITE" id="PS50958">
    <property type="entry name" value="SMB_2"/>
    <property type="match status" value="1"/>
</dbReference>
<gene>
    <name type="primary">Vtn</name>
</gene>
<keyword id="KW-0130">Cell adhesion</keyword>
<keyword id="KW-0903">Direct protein sequencing</keyword>
<keyword id="KW-1015">Disulfide bond</keyword>
<keyword id="KW-0325">Glycoprotein</keyword>
<keyword id="KW-0358">Heparin-binding</keyword>
<keyword id="KW-0597">Phosphoprotein</keyword>
<keyword id="KW-1185">Reference proteome</keyword>
<keyword id="KW-0677">Repeat</keyword>
<keyword id="KW-0964">Secreted</keyword>
<keyword id="KW-0732">Signal</keyword>
<keyword id="KW-0765">Sulfation</keyword>
<comment type="function">
    <text>Vitronectin is a cell adhesion and spreading factor found in serum and tissues. Vitronectin interact with glycosaminoglycans and proteoglycans. Is recognized by certain members of the integrin family and serves as a cell-to-substrate adhesion molecule. Inhibitor of the membrane-damaging effect of the terminal cytolytic complement pathway.</text>
</comment>
<comment type="subunit">
    <text evidence="1">Interacts with SERPINE1/PAI1, insulin and C1QBP.</text>
</comment>
<comment type="subcellular location">
    <subcellularLocation>
        <location>Secreted</location>
        <location>Extracellular space</location>
    </subcellularLocation>
</comment>
<comment type="tissue specificity">
    <text>Plasma.</text>
</comment>
<comment type="domain">
    <text evidence="1">The SMB domain mediates interaction with SERPINE1/PAI1. The heparin-binding domain mediates interaction with insulin (By similarity).</text>
</comment>
<comment type="PTM">
    <text evidence="2">Sulfated on tyrosine residues.</text>
</comment>
<comment type="PTM">
    <text evidence="1">N- and O-glycosylated.</text>
</comment>
<comment type="PTM">
    <text>It has been suggested that the active SMB domain may be permitted considerable disulfide bond heterogeneity or variability, thus two alternate disulfide patterns based on 3D structures are described with 1 disulfide bond conserved in both.</text>
</comment>